<reference key="1">
    <citation type="journal article" date="2011" name="J. Bacteriol.">
        <title>Genome sequence of lineage III Listeria monocytogenes strain HCC23.</title>
        <authorList>
            <person name="Steele C.L."/>
            <person name="Donaldson J.R."/>
            <person name="Paul D."/>
            <person name="Banes M.M."/>
            <person name="Arick T."/>
            <person name="Bridges S.M."/>
            <person name="Lawrence M.L."/>
        </authorList>
    </citation>
    <scope>NUCLEOTIDE SEQUENCE [LARGE SCALE GENOMIC DNA]</scope>
    <source>
        <strain>HCC23</strain>
    </source>
</reference>
<accession>B8DFQ2</accession>
<proteinExistence type="inferred from homology"/>
<evidence type="ECO:0000255" key="1">
    <source>
        <dbReference type="HAMAP-Rule" id="MF_00386"/>
    </source>
</evidence>
<evidence type="ECO:0000256" key="2">
    <source>
        <dbReference type="SAM" id="MobiDB-lite"/>
    </source>
</evidence>
<dbReference type="EMBL" id="CP001175">
    <property type="protein sequence ID" value="ACK39245.1"/>
    <property type="molecule type" value="Genomic_DNA"/>
</dbReference>
<dbReference type="RefSeq" id="WP_012581206.1">
    <property type="nucleotide sequence ID" value="NC_011660.1"/>
</dbReference>
<dbReference type="KEGG" id="lmh:LMHCC_0896"/>
<dbReference type="HOGENOM" id="CLU_144811_6_0_9"/>
<dbReference type="GO" id="GO:0005886">
    <property type="term" value="C:plasma membrane"/>
    <property type="evidence" value="ECO:0007669"/>
    <property type="project" value="UniProtKB-SubCell"/>
</dbReference>
<dbReference type="HAMAP" id="MF_00386">
    <property type="entry name" value="UPF0161_YidD"/>
    <property type="match status" value="1"/>
</dbReference>
<dbReference type="InterPro" id="IPR002696">
    <property type="entry name" value="Membr_insert_effic_factor_YidD"/>
</dbReference>
<dbReference type="NCBIfam" id="TIGR00278">
    <property type="entry name" value="membrane protein insertion efficiency factor YidD"/>
    <property type="match status" value="1"/>
</dbReference>
<dbReference type="PANTHER" id="PTHR33383">
    <property type="entry name" value="MEMBRANE PROTEIN INSERTION EFFICIENCY FACTOR-RELATED"/>
    <property type="match status" value="1"/>
</dbReference>
<dbReference type="PANTHER" id="PTHR33383:SF1">
    <property type="entry name" value="MEMBRANE PROTEIN INSERTION EFFICIENCY FACTOR-RELATED"/>
    <property type="match status" value="1"/>
</dbReference>
<dbReference type="Pfam" id="PF01809">
    <property type="entry name" value="YidD"/>
    <property type="match status" value="1"/>
</dbReference>
<dbReference type="SMART" id="SM01234">
    <property type="entry name" value="Haemolytic"/>
    <property type="match status" value="1"/>
</dbReference>
<sequence length="88" mass="9980">MKKILIGGIRLYQKYISRFTPATCRFYPTCSAYGIEAIQTHGALKGSYLAIRRISKCHPFHKGGLDFVPPKKDKNADSEHSCKAHHHH</sequence>
<name>YIDD_LISMH</name>
<protein>
    <recommendedName>
        <fullName evidence="1">Putative membrane protein insertion efficiency factor</fullName>
    </recommendedName>
</protein>
<gene>
    <name type="ordered locus">LMHCC_0896</name>
</gene>
<organism>
    <name type="scientific">Listeria monocytogenes serotype 4a (strain HCC23)</name>
    <dbReference type="NCBI Taxonomy" id="552536"/>
    <lineage>
        <taxon>Bacteria</taxon>
        <taxon>Bacillati</taxon>
        <taxon>Bacillota</taxon>
        <taxon>Bacilli</taxon>
        <taxon>Bacillales</taxon>
        <taxon>Listeriaceae</taxon>
        <taxon>Listeria</taxon>
    </lineage>
</organism>
<feature type="chain" id="PRO_1000197760" description="Putative membrane protein insertion efficiency factor">
    <location>
        <begin position="1"/>
        <end position="88"/>
    </location>
</feature>
<feature type="region of interest" description="Disordered" evidence="2">
    <location>
        <begin position="66"/>
        <end position="88"/>
    </location>
</feature>
<feature type="compositionally biased region" description="Basic and acidic residues" evidence="2">
    <location>
        <begin position="69"/>
        <end position="82"/>
    </location>
</feature>
<comment type="function">
    <text evidence="1">Could be involved in insertion of integral membrane proteins into the membrane.</text>
</comment>
<comment type="subcellular location">
    <subcellularLocation>
        <location evidence="1">Cell membrane</location>
        <topology evidence="1">Peripheral membrane protein</topology>
        <orientation evidence="1">Cytoplasmic side</orientation>
    </subcellularLocation>
</comment>
<comment type="similarity">
    <text evidence="1">Belongs to the UPF0161 family.</text>
</comment>
<keyword id="KW-1003">Cell membrane</keyword>
<keyword id="KW-0472">Membrane</keyword>